<gene>
    <name evidence="1" type="primary">queA</name>
    <name type="ordered locus">EcE24377A_0435</name>
</gene>
<organism>
    <name type="scientific">Escherichia coli O139:H28 (strain E24377A / ETEC)</name>
    <dbReference type="NCBI Taxonomy" id="331111"/>
    <lineage>
        <taxon>Bacteria</taxon>
        <taxon>Pseudomonadati</taxon>
        <taxon>Pseudomonadota</taxon>
        <taxon>Gammaproteobacteria</taxon>
        <taxon>Enterobacterales</taxon>
        <taxon>Enterobacteriaceae</taxon>
        <taxon>Escherichia</taxon>
    </lineage>
</organism>
<feature type="chain" id="PRO_1000057739" description="S-adenosylmethionine:tRNA ribosyltransferase-isomerase">
    <location>
        <begin position="1"/>
        <end position="356"/>
    </location>
</feature>
<name>QUEA_ECO24</name>
<accession>A7ZIF7</accession>
<keyword id="KW-0963">Cytoplasm</keyword>
<keyword id="KW-0671">Queuosine biosynthesis</keyword>
<keyword id="KW-1185">Reference proteome</keyword>
<keyword id="KW-0949">S-adenosyl-L-methionine</keyword>
<keyword id="KW-0808">Transferase</keyword>
<comment type="function">
    <text evidence="1">Transfers and isomerizes the ribose moiety from AdoMet to the 7-aminomethyl group of 7-deazaguanine (preQ1-tRNA) to give epoxyqueuosine (oQ-tRNA).</text>
</comment>
<comment type="catalytic activity">
    <reaction evidence="1">
        <text>7-aminomethyl-7-carbaguanosine(34) in tRNA + S-adenosyl-L-methionine = epoxyqueuosine(34) in tRNA + adenine + L-methionine + 2 H(+)</text>
        <dbReference type="Rhea" id="RHEA:32155"/>
        <dbReference type="Rhea" id="RHEA-COMP:10342"/>
        <dbReference type="Rhea" id="RHEA-COMP:18582"/>
        <dbReference type="ChEBI" id="CHEBI:15378"/>
        <dbReference type="ChEBI" id="CHEBI:16708"/>
        <dbReference type="ChEBI" id="CHEBI:57844"/>
        <dbReference type="ChEBI" id="CHEBI:59789"/>
        <dbReference type="ChEBI" id="CHEBI:82833"/>
        <dbReference type="ChEBI" id="CHEBI:194443"/>
        <dbReference type="EC" id="2.4.99.17"/>
    </reaction>
</comment>
<comment type="pathway">
    <text evidence="1">tRNA modification; tRNA-queuosine biosynthesis.</text>
</comment>
<comment type="subunit">
    <text evidence="1">Monomer.</text>
</comment>
<comment type="subcellular location">
    <subcellularLocation>
        <location evidence="1">Cytoplasm</location>
    </subcellularLocation>
</comment>
<comment type="similarity">
    <text evidence="1">Belongs to the QueA family.</text>
</comment>
<reference key="1">
    <citation type="journal article" date="2008" name="J. Bacteriol.">
        <title>The pangenome structure of Escherichia coli: comparative genomic analysis of E. coli commensal and pathogenic isolates.</title>
        <authorList>
            <person name="Rasko D.A."/>
            <person name="Rosovitz M.J."/>
            <person name="Myers G.S.A."/>
            <person name="Mongodin E.F."/>
            <person name="Fricke W.F."/>
            <person name="Gajer P."/>
            <person name="Crabtree J."/>
            <person name="Sebaihia M."/>
            <person name="Thomson N.R."/>
            <person name="Chaudhuri R."/>
            <person name="Henderson I.R."/>
            <person name="Sperandio V."/>
            <person name="Ravel J."/>
        </authorList>
    </citation>
    <scope>NUCLEOTIDE SEQUENCE [LARGE SCALE GENOMIC DNA]</scope>
    <source>
        <strain>E24377A / ETEC</strain>
    </source>
</reference>
<proteinExistence type="inferred from homology"/>
<dbReference type="EC" id="2.4.99.17" evidence="1"/>
<dbReference type="EMBL" id="CP000800">
    <property type="protein sequence ID" value="ABV16454.1"/>
    <property type="molecule type" value="Genomic_DNA"/>
</dbReference>
<dbReference type="RefSeq" id="WP_001266503.1">
    <property type="nucleotide sequence ID" value="NC_009801.1"/>
</dbReference>
<dbReference type="SMR" id="A7ZIF7"/>
<dbReference type="GeneID" id="93777055"/>
<dbReference type="KEGG" id="ecw:EcE24377A_0435"/>
<dbReference type="HOGENOM" id="CLU_039110_1_0_6"/>
<dbReference type="UniPathway" id="UPA00392"/>
<dbReference type="Proteomes" id="UP000001122">
    <property type="component" value="Chromosome"/>
</dbReference>
<dbReference type="GO" id="GO:0005737">
    <property type="term" value="C:cytoplasm"/>
    <property type="evidence" value="ECO:0007669"/>
    <property type="project" value="UniProtKB-SubCell"/>
</dbReference>
<dbReference type="GO" id="GO:0051075">
    <property type="term" value="F:S-adenosylmethionine:tRNA ribosyltransferase-isomerase activity"/>
    <property type="evidence" value="ECO:0007669"/>
    <property type="project" value="UniProtKB-EC"/>
</dbReference>
<dbReference type="GO" id="GO:0008616">
    <property type="term" value="P:queuosine biosynthetic process"/>
    <property type="evidence" value="ECO:0007669"/>
    <property type="project" value="UniProtKB-UniRule"/>
</dbReference>
<dbReference type="GO" id="GO:0002099">
    <property type="term" value="P:tRNA wobble guanine modification"/>
    <property type="evidence" value="ECO:0007669"/>
    <property type="project" value="TreeGrafter"/>
</dbReference>
<dbReference type="FunFam" id="2.40.10.240:FF:000001">
    <property type="entry name" value="S-adenosylmethionine:tRNA ribosyltransferase-isomerase"/>
    <property type="match status" value="1"/>
</dbReference>
<dbReference type="FunFam" id="3.40.1780.10:FF:000001">
    <property type="entry name" value="S-adenosylmethionine:tRNA ribosyltransferase-isomerase"/>
    <property type="match status" value="1"/>
</dbReference>
<dbReference type="Gene3D" id="2.40.10.240">
    <property type="entry name" value="QueA-like"/>
    <property type="match status" value="1"/>
</dbReference>
<dbReference type="Gene3D" id="3.40.1780.10">
    <property type="entry name" value="QueA-like"/>
    <property type="match status" value="1"/>
</dbReference>
<dbReference type="HAMAP" id="MF_00113">
    <property type="entry name" value="QueA"/>
    <property type="match status" value="1"/>
</dbReference>
<dbReference type="InterPro" id="IPR003699">
    <property type="entry name" value="QueA"/>
</dbReference>
<dbReference type="InterPro" id="IPR042118">
    <property type="entry name" value="QueA_dom1"/>
</dbReference>
<dbReference type="InterPro" id="IPR042119">
    <property type="entry name" value="QueA_dom2"/>
</dbReference>
<dbReference type="InterPro" id="IPR036100">
    <property type="entry name" value="QueA_sf"/>
</dbReference>
<dbReference type="NCBIfam" id="NF001140">
    <property type="entry name" value="PRK00147.1"/>
    <property type="match status" value="1"/>
</dbReference>
<dbReference type="NCBIfam" id="TIGR00113">
    <property type="entry name" value="queA"/>
    <property type="match status" value="1"/>
</dbReference>
<dbReference type="PANTHER" id="PTHR30307">
    <property type="entry name" value="S-ADENOSYLMETHIONINE:TRNA RIBOSYLTRANSFERASE-ISOMERASE"/>
    <property type="match status" value="1"/>
</dbReference>
<dbReference type="PANTHER" id="PTHR30307:SF0">
    <property type="entry name" value="S-ADENOSYLMETHIONINE:TRNA RIBOSYLTRANSFERASE-ISOMERASE"/>
    <property type="match status" value="1"/>
</dbReference>
<dbReference type="Pfam" id="PF02547">
    <property type="entry name" value="Queuosine_synth"/>
    <property type="match status" value="1"/>
</dbReference>
<dbReference type="SUPFAM" id="SSF111337">
    <property type="entry name" value="QueA-like"/>
    <property type="match status" value="1"/>
</dbReference>
<protein>
    <recommendedName>
        <fullName evidence="1">S-adenosylmethionine:tRNA ribosyltransferase-isomerase</fullName>
        <ecNumber evidence="1">2.4.99.17</ecNumber>
    </recommendedName>
    <alternativeName>
        <fullName evidence="1">Queuosine biosynthesis protein QueA</fullName>
    </alternativeName>
</protein>
<evidence type="ECO:0000255" key="1">
    <source>
        <dbReference type="HAMAP-Rule" id="MF_00113"/>
    </source>
</evidence>
<sequence length="356" mass="39431">MRVTDFSFELPESLIAHYPMPERSSCRLLSLDGPTGALTHGTFTDLLDKLNPGDLLVFNNTRVIPARLFGRKASGGKIEVLVERMLDDKRILAHIRASKAPKPGAELLLGDDESINATMTARHGALFEVEFNDERSVLDILNSIGHMPLPPYIDRPDEDADRELYQTVYSEKPGAVAAPTAGLHFDEPLLEKLRAKGVEMAFVTLHVGAGTFQPVRVDTIEDHIMHSEYAEVPQDVVDAVLAAKARGNRVIAVGTTSVRSLESAAQAAKNDLIEPFFDDTQIFIYPGFQYKVVDALVTNFHLPESTLIMLVSAFAGYQHTMNAYKAAVEEKYRFFSYGDAMFITYNPQAINERVGE</sequence>